<keyword id="KW-0007">Acetylation</keyword>
<keyword id="KW-0456">Lyase</keyword>
<keyword id="KW-0663">Pyridoxal phosphate</keyword>
<keyword id="KW-1185">Reference proteome</keyword>
<keyword id="KW-0823">Tryptophan catabolism</keyword>
<comment type="catalytic activity">
    <reaction evidence="1">
        <text>L-tryptophan + H2O = indole + pyruvate + NH4(+)</text>
        <dbReference type="Rhea" id="RHEA:19553"/>
        <dbReference type="ChEBI" id="CHEBI:15361"/>
        <dbReference type="ChEBI" id="CHEBI:15377"/>
        <dbReference type="ChEBI" id="CHEBI:16881"/>
        <dbReference type="ChEBI" id="CHEBI:28938"/>
        <dbReference type="ChEBI" id="CHEBI:57912"/>
        <dbReference type="EC" id="4.1.99.1"/>
    </reaction>
</comment>
<comment type="cofactor">
    <cofactor evidence="1">
        <name>pyridoxal 5'-phosphate</name>
        <dbReference type="ChEBI" id="CHEBI:597326"/>
    </cofactor>
</comment>
<comment type="pathway">
    <text evidence="1">Amino-acid degradation; L-tryptophan degradation via pyruvate pathway; indole and pyruvate from L-tryptophan: step 1/1.</text>
</comment>
<comment type="subunit">
    <text evidence="1">Homotetramer.</text>
</comment>
<comment type="similarity">
    <text evidence="1">Belongs to the beta-eliminating lyase family.</text>
</comment>
<sequence length="471" mass="52773">MENFKHLPEPFRIRVIEPVKRTTRAYREEAIIKSGMNPFLLDSEDVFIDLLTDSGTGAVTQSMQAAMMRGDEAYSGSRSYYALAESVKNIFGYQYTIPTHQGRGAEQIYIPVLIKKREQEKGLDRSKMVAFSNYFFDTTQGHSQINGCTVRNVYIKEAFDTGVRYDFKGNFDLEGLERGIEEVGPNNVPYIVATITSNSAGGQPVSLANLKAMYSIAKKYDIPVVMDSARFAENAYFIKQREAEYKDWTIEQITRETYKYADMLAMSAKKDAMVPMGGLLCMKDDSFFDVYTECRTLCVVQEGFPTYGGLEGGAMERLAVGLYDGMNLDWLAYRIAQVQYLVDGLEEIGVVCQQAGGHAAFVDAGKLLPHIPADQFPAQALACELYKVAGIRAVEIGSFLLGRDPKTGKQLPCPAELLRLTIPRATYTQTHMDFIIEAFKHVKENAANIKGLTFTYEPKVLRHFTAKLKEV</sequence>
<organism>
    <name type="scientific">Escherichia coli (strain 55989 / EAEC)</name>
    <dbReference type="NCBI Taxonomy" id="585055"/>
    <lineage>
        <taxon>Bacteria</taxon>
        <taxon>Pseudomonadati</taxon>
        <taxon>Pseudomonadota</taxon>
        <taxon>Gammaproteobacteria</taxon>
        <taxon>Enterobacterales</taxon>
        <taxon>Enterobacteriaceae</taxon>
        <taxon>Escherichia</taxon>
    </lineage>
</organism>
<gene>
    <name evidence="1" type="primary">tnaA</name>
    <name type="ordered locus">EC55989_4178</name>
</gene>
<dbReference type="EC" id="4.1.99.1" evidence="1"/>
<dbReference type="EMBL" id="CU928145">
    <property type="protein sequence ID" value="CAV00768.1"/>
    <property type="molecule type" value="Genomic_DNA"/>
</dbReference>
<dbReference type="RefSeq" id="WP_001295247.1">
    <property type="nucleotide sequence ID" value="NC_011748.1"/>
</dbReference>
<dbReference type="SMR" id="B7L853"/>
<dbReference type="GeneID" id="75205423"/>
<dbReference type="KEGG" id="eck:EC55989_4178"/>
<dbReference type="HOGENOM" id="CLU_047223_0_0_6"/>
<dbReference type="UniPathway" id="UPA00332">
    <property type="reaction ID" value="UER00452"/>
</dbReference>
<dbReference type="Proteomes" id="UP000000746">
    <property type="component" value="Chromosome"/>
</dbReference>
<dbReference type="GO" id="GO:0009034">
    <property type="term" value="F:tryptophanase activity"/>
    <property type="evidence" value="ECO:0007669"/>
    <property type="project" value="UniProtKB-UniRule"/>
</dbReference>
<dbReference type="FunFam" id="3.40.640.10:FF:000039">
    <property type="entry name" value="Tryptophanase"/>
    <property type="match status" value="1"/>
</dbReference>
<dbReference type="Gene3D" id="3.90.1150.10">
    <property type="entry name" value="Aspartate Aminotransferase, domain 1"/>
    <property type="match status" value="1"/>
</dbReference>
<dbReference type="Gene3D" id="3.40.640.10">
    <property type="entry name" value="Type I PLP-dependent aspartate aminotransferase-like (Major domain)"/>
    <property type="match status" value="1"/>
</dbReference>
<dbReference type="HAMAP" id="MF_00544">
    <property type="entry name" value="Tryptophanase"/>
    <property type="match status" value="1"/>
</dbReference>
<dbReference type="InterPro" id="IPR001597">
    <property type="entry name" value="ArAA_b-elim_lyase/Thr_aldolase"/>
</dbReference>
<dbReference type="InterPro" id="IPR011166">
    <property type="entry name" value="Beta-eliminating_lyase"/>
</dbReference>
<dbReference type="InterPro" id="IPR015424">
    <property type="entry name" value="PyrdxlP-dep_Trfase"/>
</dbReference>
<dbReference type="InterPro" id="IPR015421">
    <property type="entry name" value="PyrdxlP-dep_Trfase_major"/>
</dbReference>
<dbReference type="InterPro" id="IPR015422">
    <property type="entry name" value="PyrdxlP-dep_Trfase_small"/>
</dbReference>
<dbReference type="InterPro" id="IPR013440">
    <property type="entry name" value="TNase"/>
</dbReference>
<dbReference type="InterPro" id="IPR018176">
    <property type="entry name" value="Tryptophanase_CS"/>
</dbReference>
<dbReference type="NCBIfam" id="NF009709">
    <property type="entry name" value="PRK13238.1"/>
    <property type="match status" value="1"/>
</dbReference>
<dbReference type="NCBIfam" id="TIGR02617">
    <property type="entry name" value="tnaA_trp_ase"/>
    <property type="match status" value="1"/>
</dbReference>
<dbReference type="PANTHER" id="PTHR32325">
    <property type="entry name" value="BETA-ELIMINATING LYASE-LIKE PROTEIN-RELATED"/>
    <property type="match status" value="1"/>
</dbReference>
<dbReference type="PANTHER" id="PTHR32325:SF4">
    <property type="entry name" value="TRYPTOPHANASE"/>
    <property type="match status" value="1"/>
</dbReference>
<dbReference type="Pfam" id="PF01212">
    <property type="entry name" value="Beta_elim_lyase"/>
    <property type="match status" value="1"/>
</dbReference>
<dbReference type="PIRSF" id="PIRSF001386">
    <property type="entry name" value="Trpase"/>
    <property type="match status" value="1"/>
</dbReference>
<dbReference type="SUPFAM" id="SSF53383">
    <property type="entry name" value="PLP-dependent transferases"/>
    <property type="match status" value="1"/>
</dbReference>
<dbReference type="PROSITE" id="PS00853">
    <property type="entry name" value="BETA_ELIM_LYASE"/>
    <property type="match status" value="1"/>
</dbReference>
<proteinExistence type="inferred from homology"/>
<reference key="1">
    <citation type="journal article" date="2009" name="PLoS Genet.">
        <title>Organised genome dynamics in the Escherichia coli species results in highly diverse adaptive paths.</title>
        <authorList>
            <person name="Touchon M."/>
            <person name="Hoede C."/>
            <person name="Tenaillon O."/>
            <person name="Barbe V."/>
            <person name="Baeriswyl S."/>
            <person name="Bidet P."/>
            <person name="Bingen E."/>
            <person name="Bonacorsi S."/>
            <person name="Bouchier C."/>
            <person name="Bouvet O."/>
            <person name="Calteau A."/>
            <person name="Chiapello H."/>
            <person name="Clermont O."/>
            <person name="Cruveiller S."/>
            <person name="Danchin A."/>
            <person name="Diard M."/>
            <person name="Dossat C."/>
            <person name="Karoui M.E."/>
            <person name="Frapy E."/>
            <person name="Garry L."/>
            <person name="Ghigo J.M."/>
            <person name="Gilles A.M."/>
            <person name="Johnson J."/>
            <person name="Le Bouguenec C."/>
            <person name="Lescat M."/>
            <person name="Mangenot S."/>
            <person name="Martinez-Jehanne V."/>
            <person name="Matic I."/>
            <person name="Nassif X."/>
            <person name="Oztas S."/>
            <person name="Petit M.A."/>
            <person name="Pichon C."/>
            <person name="Rouy Z."/>
            <person name="Ruf C.S."/>
            <person name="Schneider D."/>
            <person name="Tourret J."/>
            <person name="Vacherie B."/>
            <person name="Vallenet D."/>
            <person name="Medigue C."/>
            <person name="Rocha E.P.C."/>
            <person name="Denamur E."/>
        </authorList>
    </citation>
    <scope>NUCLEOTIDE SEQUENCE [LARGE SCALE GENOMIC DNA]</scope>
    <source>
        <strain>55989 / EAEC</strain>
    </source>
</reference>
<accession>B7L853</accession>
<protein>
    <recommendedName>
        <fullName evidence="1">Tryptophanase</fullName>
        <ecNumber evidence="1">4.1.99.1</ecNumber>
    </recommendedName>
    <alternativeName>
        <fullName evidence="1">L-tryptophan indole-lyase</fullName>
        <shortName evidence="1">TNase</shortName>
    </alternativeName>
</protein>
<feature type="chain" id="PRO_1000146592" description="Tryptophanase">
    <location>
        <begin position="1"/>
        <end position="471"/>
    </location>
</feature>
<feature type="modified residue" description="N6-acetyllysine" evidence="1">
    <location>
        <position position="5"/>
    </location>
</feature>
<feature type="modified residue" description="N6-acetyllysine" evidence="1">
    <location>
        <position position="115"/>
    </location>
</feature>
<feature type="modified residue" description="N6-acetyllysine" evidence="1">
    <location>
        <position position="156"/>
    </location>
</feature>
<feature type="modified residue" description="N6-(pyridoxal phosphate)lysine" evidence="1">
    <location>
        <position position="270"/>
    </location>
</feature>
<feature type="modified residue" description="N6-acetyllysine" evidence="1">
    <location>
        <position position="450"/>
    </location>
</feature>
<name>TNAA_ECO55</name>
<evidence type="ECO:0000255" key="1">
    <source>
        <dbReference type="HAMAP-Rule" id="MF_00544"/>
    </source>
</evidence>